<comment type="function">
    <text evidence="1">Catalyzes the phosphorylation of pantothenate (Pan), the first step in CoA biosynthesis.</text>
</comment>
<comment type="catalytic activity">
    <reaction evidence="1">
        <text>(R)-pantothenate + ATP = (R)-4'-phosphopantothenate + ADP + H(+)</text>
        <dbReference type="Rhea" id="RHEA:16373"/>
        <dbReference type="ChEBI" id="CHEBI:10986"/>
        <dbReference type="ChEBI" id="CHEBI:15378"/>
        <dbReference type="ChEBI" id="CHEBI:29032"/>
        <dbReference type="ChEBI" id="CHEBI:30616"/>
        <dbReference type="ChEBI" id="CHEBI:456216"/>
        <dbReference type="EC" id="2.7.1.33"/>
    </reaction>
</comment>
<comment type="cofactor">
    <cofactor evidence="1">
        <name>NH4(+)</name>
        <dbReference type="ChEBI" id="CHEBI:28938"/>
    </cofactor>
    <cofactor evidence="1">
        <name>K(+)</name>
        <dbReference type="ChEBI" id="CHEBI:29103"/>
    </cofactor>
    <text evidence="1">A monovalent cation. Ammonium or potassium.</text>
</comment>
<comment type="pathway">
    <text evidence="1">Cofactor biosynthesis; coenzyme A biosynthesis; CoA from (R)-pantothenate: step 1/5.</text>
</comment>
<comment type="subunit">
    <text evidence="1">Homodimer.</text>
</comment>
<comment type="subcellular location">
    <subcellularLocation>
        <location evidence="1">Cytoplasm</location>
    </subcellularLocation>
</comment>
<comment type="similarity">
    <text evidence="1">Belongs to the type III pantothenate kinase family.</text>
</comment>
<accession>Q1MS79</accession>
<organism>
    <name type="scientific">Lawsonia intracellularis (strain PHE/MN1-00)</name>
    <dbReference type="NCBI Taxonomy" id="363253"/>
    <lineage>
        <taxon>Bacteria</taxon>
        <taxon>Pseudomonadati</taxon>
        <taxon>Thermodesulfobacteriota</taxon>
        <taxon>Desulfovibrionia</taxon>
        <taxon>Desulfovibrionales</taxon>
        <taxon>Desulfovibrionaceae</taxon>
        <taxon>Lawsonia</taxon>
    </lineage>
</organism>
<evidence type="ECO:0000255" key="1">
    <source>
        <dbReference type="HAMAP-Rule" id="MF_01274"/>
    </source>
</evidence>
<dbReference type="EC" id="2.7.1.33" evidence="1"/>
<dbReference type="EMBL" id="AM180252">
    <property type="protein sequence ID" value="CAJ54146.1"/>
    <property type="molecule type" value="Genomic_DNA"/>
</dbReference>
<dbReference type="RefSeq" id="WP_011526173.1">
    <property type="nucleotide sequence ID" value="NC_008011.1"/>
</dbReference>
<dbReference type="SMR" id="Q1MS79"/>
<dbReference type="STRING" id="363253.LI0090"/>
<dbReference type="KEGG" id="lip:LI0090"/>
<dbReference type="eggNOG" id="COG1521">
    <property type="taxonomic scope" value="Bacteria"/>
</dbReference>
<dbReference type="HOGENOM" id="CLU_066627_1_0_7"/>
<dbReference type="OrthoDB" id="9804707at2"/>
<dbReference type="UniPathway" id="UPA00241">
    <property type="reaction ID" value="UER00352"/>
</dbReference>
<dbReference type="Proteomes" id="UP000002430">
    <property type="component" value="Chromosome"/>
</dbReference>
<dbReference type="GO" id="GO:0005737">
    <property type="term" value="C:cytoplasm"/>
    <property type="evidence" value="ECO:0007669"/>
    <property type="project" value="UniProtKB-SubCell"/>
</dbReference>
<dbReference type="GO" id="GO:0005524">
    <property type="term" value="F:ATP binding"/>
    <property type="evidence" value="ECO:0007669"/>
    <property type="project" value="UniProtKB-UniRule"/>
</dbReference>
<dbReference type="GO" id="GO:0046872">
    <property type="term" value="F:metal ion binding"/>
    <property type="evidence" value="ECO:0007669"/>
    <property type="project" value="UniProtKB-KW"/>
</dbReference>
<dbReference type="GO" id="GO:0004594">
    <property type="term" value="F:pantothenate kinase activity"/>
    <property type="evidence" value="ECO:0007669"/>
    <property type="project" value="UniProtKB-UniRule"/>
</dbReference>
<dbReference type="GO" id="GO:0015937">
    <property type="term" value="P:coenzyme A biosynthetic process"/>
    <property type="evidence" value="ECO:0007669"/>
    <property type="project" value="UniProtKB-UniRule"/>
</dbReference>
<dbReference type="CDD" id="cd24015">
    <property type="entry name" value="ASKHA_NBD_PanK-III"/>
    <property type="match status" value="1"/>
</dbReference>
<dbReference type="Gene3D" id="3.30.420.40">
    <property type="match status" value="2"/>
</dbReference>
<dbReference type="HAMAP" id="MF_01274">
    <property type="entry name" value="Pantothen_kinase_3"/>
    <property type="match status" value="1"/>
</dbReference>
<dbReference type="InterPro" id="IPR043129">
    <property type="entry name" value="ATPase_NBD"/>
</dbReference>
<dbReference type="InterPro" id="IPR004619">
    <property type="entry name" value="Type_III_PanK"/>
</dbReference>
<dbReference type="NCBIfam" id="TIGR00671">
    <property type="entry name" value="baf"/>
    <property type="match status" value="1"/>
</dbReference>
<dbReference type="NCBIfam" id="NF009855">
    <property type="entry name" value="PRK13321.1"/>
    <property type="match status" value="1"/>
</dbReference>
<dbReference type="PANTHER" id="PTHR34265">
    <property type="entry name" value="TYPE III PANTOTHENATE KINASE"/>
    <property type="match status" value="1"/>
</dbReference>
<dbReference type="PANTHER" id="PTHR34265:SF1">
    <property type="entry name" value="TYPE III PANTOTHENATE KINASE"/>
    <property type="match status" value="1"/>
</dbReference>
<dbReference type="Pfam" id="PF03309">
    <property type="entry name" value="Pan_kinase"/>
    <property type="match status" value="1"/>
</dbReference>
<dbReference type="SUPFAM" id="SSF53067">
    <property type="entry name" value="Actin-like ATPase domain"/>
    <property type="match status" value="2"/>
</dbReference>
<sequence length="269" mass="29248">MENYGLFIDVGNTSVKIGIGVIDRLLISYTLSTNNSLSGDTLGIQLLQCINHAEQVINKDITISSCMMSSVVPTMDTLLQYACERFLLCKPHIINQDFIIPLDNHYEEQCEVGADRLVAAYAARRLFPDSKSVVSVDYGTATTFDCVTDNTYLGGLICPGIKSSLQALYTNTAKLPSIILNTASKVPIIGKNTKTSLTHGFLFGFATMTEGIYSKLINVLDGPVTFVATGGFARDMANVVCCFDAVCPDLILDGLHLLWIDCLSKSYSL</sequence>
<name>COAX_LAWIP</name>
<reference key="1">
    <citation type="submission" date="2005-11" db="EMBL/GenBank/DDBJ databases">
        <title>The complete genome sequence of Lawsonia intracellularis: the causative agent of proliferative enteropathy.</title>
        <authorList>
            <person name="Kaur K."/>
            <person name="Zhang Q."/>
            <person name="Beckler D."/>
            <person name="Munir S."/>
            <person name="Li L."/>
            <person name="Kinsley K."/>
            <person name="Herron L."/>
            <person name="Peterson A."/>
            <person name="May B."/>
            <person name="Singh S."/>
            <person name="Gebhart C."/>
            <person name="Kapur V."/>
        </authorList>
    </citation>
    <scope>NUCLEOTIDE SEQUENCE [LARGE SCALE GENOMIC DNA]</scope>
    <source>
        <strain>PHE/MN1-00</strain>
    </source>
</reference>
<gene>
    <name evidence="1" type="primary">coaX</name>
    <name type="ordered locus">LI0090</name>
</gene>
<proteinExistence type="inferred from homology"/>
<feature type="chain" id="PRO_0000267550" description="Type III pantothenate kinase">
    <location>
        <begin position="1"/>
        <end position="269"/>
    </location>
</feature>
<feature type="active site" description="Proton acceptor" evidence="1">
    <location>
        <position position="115"/>
    </location>
</feature>
<feature type="binding site" evidence="1">
    <location>
        <begin position="9"/>
        <end position="16"/>
    </location>
    <ligand>
        <name>ATP</name>
        <dbReference type="ChEBI" id="CHEBI:30616"/>
    </ligand>
</feature>
<feature type="binding site" evidence="1">
    <location>
        <position position="106"/>
    </location>
    <ligand>
        <name>substrate</name>
    </ligand>
</feature>
<feature type="binding site" evidence="1">
    <location>
        <begin position="113"/>
        <end position="116"/>
    </location>
    <ligand>
        <name>substrate</name>
    </ligand>
</feature>
<feature type="binding site" evidence="1">
    <location>
        <position position="137"/>
    </location>
    <ligand>
        <name>K(+)</name>
        <dbReference type="ChEBI" id="CHEBI:29103"/>
    </ligand>
</feature>
<feature type="binding site" evidence="1">
    <location>
        <position position="140"/>
    </location>
    <ligand>
        <name>ATP</name>
        <dbReference type="ChEBI" id="CHEBI:30616"/>
    </ligand>
</feature>
<feature type="binding site" evidence="1">
    <location>
        <position position="193"/>
    </location>
    <ligand>
        <name>substrate</name>
    </ligand>
</feature>
<protein>
    <recommendedName>
        <fullName evidence="1">Type III pantothenate kinase</fullName>
        <ecNumber evidence="1">2.7.1.33</ecNumber>
    </recommendedName>
    <alternativeName>
        <fullName evidence="1">PanK-III</fullName>
    </alternativeName>
    <alternativeName>
        <fullName evidence="1">Pantothenic acid kinase</fullName>
    </alternativeName>
</protein>
<keyword id="KW-0067">ATP-binding</keyword>
<keyword id="KW-0173">Coenzyme A biosynthesis</keyword>
<keyword id="KW-0963">Cytoplasm</keyword>
<keyword id="KW-0418">Kinase</keyword>
<keyword id="KW-0479">Metal-binding</keyword>
<keyword id="KW-0547">Nucleotide-binding</keyword>
<keyword id="KW-0630">Potassium</keyword>
<keyword id="KW-1185">Reference proteome</keyword>
<keyword id="KW-0808">Transferase</keyword>